<dbReference type="EC" id="4.2.1.59" evidence="1"/>
<dbReference type="EC" id="5.3.3.14" evidence="1"/>
<dbReference type="EMBL" id="BA000040">
    <property type="protein sequence ID" value="BAC46034.1"/>
    <property type="molecule type" value="Genomic_DNA"/>
</dbReference>
<dbReference type="RefSeq" id="NP_767409.1">
    <property type="nucleotide sequence ID" value="NC_004463.1"/>
</dbReference>
<dbReference type="RefSeq" id="WP_011083591.1">
    <property type="nucleotide sequence ID" value="NC_004463.1"/>
</dbReference>
<dbReference type="SMR" id="Q89WC3"/>
<dbReference type="FunCoup" id="Q89WC3">
    <property type="interactions" value="185"/>
</dbReference>
<dbReference type="STRING" id="224911.AAV28_00695"/>
<dbReference type="EnsemblBacteria" id="BAC46034">
    <property type="protein sequence ID" value="BAC46034"/>
    <property type="gene ID" value="BAC46034"/>
</dbReference>
<dbReference type="GeneID" id="46488045"/>
<dbReference type="KEGG" id="bja:blr0769"/>
<dbReference type="PATRIC" id="fig|224911.44.peg.143"/>
<dbReference type="eggNOG" id="COG0764">
    <property type="taxonomic scope" value="Bacteria"/>
</dbReference>
<dbReference type="HOGENOM" id="CLU_097925_0_0_5"/>
<dbReference type="InParanoid" id="Q89WC3"/>
<dbReference type="OrthoDB" id="9786735at2"/>
<dbReference type="PhylomeDB" id="Q89WC3"/>
<dbReference type="UniPathway" id="UPA00094"/>
<dbReference type="Proteomes" id="UP000002526">
    <property type="component" value="Chromosome"/>
</dbReference>
<dbReference type="GO" id="GO:0005737">
    <property type="term" value="C:cytoplasm"/>
    <property type="evidence" value="ECO:0007669"/>
    <property type="project" value="UniProtKB-SubCell"/>
</dbReference>
<dbReference type="GO" id="GO:0019171">
    <property type="term" value="F:(3R)-hydroxyacyl-[acyl-carrier-protein] dehydratase activity"/>
    <property type="evidence" value="ECO:0007669"/>
    <property type="project" value="UniProtKB-UniRule"/>
</dbReference>
<dbReference type="GO" id="GO:0034017">
    <property type="term" value="F:trans-2-decenoyl-acyl-carrier-protein isomerase activity"/>
    <property type="evidence" value="ECO:0007669"/>
    <property type="project" value="UniProtKB-UniRule"/>
</dbReference>
<dbReference type="GO" id="GO:0006636">
    <property type="term" value="P:unsaturated fatty acid biosynthetic process"/>
    <property type="evidence" value="ECO:0007669"/>
    <property type="project" value="UniProtKB-UniRule"/>
</dbReference>
<dbReference type="CDD" id="cd01287">
    <property type="entry name" value="FabA"/>
    <property type="match status" value="1"/>
</dbReference>
<dbReference type="Gene3D" id="3.10.129.10">
    <property type="entry name" value="Hotdog Thioesterase"/>
    <property type="match status" value="1"/>
</dbReference>
<dbReference type="HAMAP" id="MF_00405">
    <property type="entry name" value="FabA"/>
    <property type="match status" value="1"/>
</dbReference>
<dbReference type="InterPro" id="IPR010083">
    <property type="entry name" value="FabA"/>
</dbReference>
<dbReference type="InterPro" id="IPR013114">
    <property type="entry name" value="FabA_FabZ"/>
</dbReference>
<dbReference type="InterPro" id="IPR029069">
    <property type="entry name" value="HotDog_dom_sf"/>
</dbReference>
<dbReference type="NCBIfam" id="TIGR01749">
    <property type="entry name" value="fabA"/>
    <property type="match status" value="1"/>
</dbReference>
<dbReference type="NCBIfam" id="NF003509">
    <property type="entry name" value="PRK05174.1"/>
    <property type="match status" value="1"/>
</dbReference>
<dbReference type="PANTHER" id="PTHR30272">
    <property type="entry name" value="3-HYDROXYACYL-[ACYL-CARRIER-PROTEIN] DEHYDRATASE"/>
    <property type="match status" value="1"/>
</dbReference>
<dbReference type="PANTHER" id="PTHR30272:SF8">
    <property type="entry name" value="3-HYDROXYDECANOYL-[ACYL-CARRIER-PROTEIN] DEHYDRATASE"/>
    <property type="match status" value="1"/>
</dbReference>
<dbReference type="Pfam" id="PF07977">
    <property type="entry name" value="FabA"/>
    <property type="match status" value="1"/>
</dbReference>
<dbReference type="SUPFAM" id="SSF54637">
    <property type="entry name" value="Thioesterase/thiol ester dehydrase-isomerase"/>
    <property type="match status" value="1"/>
</dbReference>
<name>FABA_BRADU</name>
<accession>Q89WC3</accession>
<protein>
    <recommendedName>
        <fullName evidence="1">3-hydroxydecanoyl-[acyl-carrier-protein] dehydratase</fullName>
        <ecNumber evidence="1">4.2.1.59</ecNumber>
    </recommendedName>
    <alternativeName>
        <fullName evidence="1">3-hydroxyacyl-[acyl-carrier-protein] dehydratase FabA</fullName>
    </alternativeName>
    <alternativeName>
        <fullName evidence="1">Beta-hydroxydecanoyl thioester dehydrase</fullName>
    </alternativeName>
    <alternativeName>
        <fullName evidence="1">Trans-2-decenoyl-[acyl-carrier-protein] isomerase</fullName>
        <ecNumber evidence="1">5.3.3.14</ecNumber>
    </alternativeName>
</protein>
<organism>
    <name type="scientific">Bradyrhizobium diazoefficiens (strain JCM 10833 / BCRC 13528 / IAM 13628 / NBRC 14792 / USDA 110)</name>
    <dbReference type="NCBI Taxonomy" id="224911"/>
    <lineage>
        <taxon>Bacteria</taxon>
        <taxon>Pseudomonadati</taxon>
        <taxon>Pseudomonadota</taxon>
        <taxon>Alphaproteobacteria</taxon>
        <taxon>Hyphomicrobiales</taxon>
        <taxon>Nitrobacteraceae</taxon>
        <taxon>Bradyrhizobium</taxon>
    </lineage>
</organism>
<proteinExistence type="inferred from homology"/>
<keyword id="KW-0963">Cytoplasm</keyword>
<keyword id="KW-0275">Fatty acid biosynthesis</keyword>
<keyword id="KW-0276">Fatty acid metabolism</keyword>
<keyword id="KW-0413">Isomerase</keyword>
<keyword id="KW-0444">Lipid biosynthesis</keyword>
<keyword id="KW-0443">Lipid metabolism</keyword>
<keyword id="KW-0456">Lyase</keyword>
<keyword id="KW-1185">Reference proteome</keyword>
<evidence type="ECO:0000255" key="1">
    <source>
        <dbReference type="HAMAP-Rule" id="MF_00405"/>
    </source>
</evidence>
<reference key="1">
    <citation type="journal article" date="2002" name="DNA Res.">
        <title>Complete genomic sequence of nitrogen-fixing symbiotic bacterium Bradyrhizobium japonicum USDA110.</title>
        <authorList>
            <person name="Kaneko T."/>
            <person name="Nakamura Y."/>
            <person name="Sato S."/>
            <person name="Minamisawa K."/>
            <person name="Uchiumi T."/>
            <person name="Sasamoto S."/>
            <person name="Watanabe A."/>
            <person name="Idesawa K."/>
            <person name="Iriguchi M."/>
            <person name="Kawashima K."/>
            <person name="Kohara M."/>
            <person name="Matsumoto M."/>
            <person name="Shimpo S."/>
            <person name="Tsuruoka H."/>
            <person name="Wada T."/>
            <person name="Yamada M."/>
            <person name="Tabata S."/>
        </authorList>
    </citation>
    <scope>NUCLEOTIDE SEQUENCE [LARGE SCALE GENOMIC DNA]</scope>
    <source>
        <strain>JCM 10833 / BCRC 13528 / IAM 13628 / NBRC 14792 / USDA 110</strain>
    </source>
</reference>
<feature type="chain" id="PRO_0000091589" description="3-hydroxydecanoyl-[acyl-carrier-protein] dehydratase">
    <location>
        <begin position="1"/>
        <end position="173"/>
    </location>
</feature>
<feature type="active site" evidence="1">
    <location>
        <position position="71"/>
    </location>
</feature>
<sequence>MLNRRNGYEYEDLLACARGEMFGPGNAQLPLPPMLMFDRITDINDNGGEFGKGLVRAELDVKPDLWFFGCHFKNDPVMPGCLGLDALWQMVGFYLGWSGGEGRGRALGLNELKFSGQVLPEARKVVYNVDIKRVMRAKLVLGIADGWLSVDDQIIYRAKDLKVGLFKQGTSLG</sequence>
<comment type="function">
    <text evidence="1">Necessary for the introduction of cis unsaturation into fatty acids. Catalyzes the dehydration of (3R)-3-hydroxydecanoyl-ACP to E-(2)-decenoyl-ACP and then its isomerization to Z-(3)-decenoyl-ACP. Can catalyze the dehydratase reaction for beta-hydroxyacyl-ACPs with saturated chain lengths up to 16:0, being most active on intermediate chain length.</text>
</comment>
<comment type="catalytic activity">
    <reaction evidence="1">
        <text>a (3R)-hydroxyacyl-[ACP] = a (2E)-enoyl-[ACP] + H2O</text>
        <dbReference type="Rhea" id="RHEA:13097"/>
        <dbReference type="Rhea" id="RHEA-COMP:9925"/>
        <dbReference type="Rhea" id="RHEA-COMP:9945"/>
        <dbReference type="ChEBI" id="CHEBI:15377"/>
        <dbReference type="ChEBI" id="CHEBI:78784"/>
        <dbReference type="ChEBI" id="CHEBI:78827"/>
        <dbReference type="EC" id="4.2.1.59"/>
    </reaction>
</comment>
<comment type="catalytic activity">
    <reaction evidence="1">
        <text>(3R)-hydroxydecanoyl-[ACP] = (2E)-decenoyl-[ACP] + H2O</text>
        <dbReference type="Rhea" id="RHEA:41860"/>
        <dbReference type="Rhea" id="RHEA-COMP:9638"/>
        <dbReference type="Rhea" id="RHEA-COMP:9639"/>
        <dbReference type="ChEBI" id="CHEBI:15377"/>
        <dbReference type="ChEBI" id="CHEBI:78466"/>
        <dbReference type="ChEBI" id="CHEBI:78467"/>
    </reaction>
</comment>
<comment type="catalytic activity">
    <reaction evidence="1">
        <text>(2E)-decenoyl-[ACP] = (3Z)-decenoyl-[ACP]</text>
        <dbReference type="Rhea" id="RHEA:23568"/>
        <dbReference type="Rhea" id="RHEA-COMP:9639"/>
        <dbReference type="Rhea" id="RHEA-COMP:9927"/>
        <dbReference type="ChEBI" id="CHEBI:78467"/>
        <dbReference type="ChEBI" id="CHEBI:78798"/>
        <dbReference type="EC" id="5.3.3.14"/>
    </reaction>
</comment>
<comment type="pathway">
    <text evidence="1">Lipid metabolism; fatty acid biosynthesis.</text>
</comment>
<comment type="subunit">
    <text evidence="1">Homodimer.</text>
</comment>
<comment type="subcellular location">
    <subcellularLocation>
        <location evidence="1">Cytoplasm</location>
    </subcellularLocation>
</comment>
<comment type="similarity">
    <text evidence="1">Belongs to the thioester dehydratase family. FabA subfamily.</text>
</comment>
<gene>
    <name evidence="1" type="primary">fabA</name>
    <name type="ordered locus">blr0769</name>
</gene>